<organism>
    <name type="scientific">Streptococcus agalactiae serotype Ia (strain ATCC 27591 / A909 / CDC SS700)</name>
    <dbReference type="NCBI Taxonomy" id="205921"/>
    <lineage>
        <taxon>Bacteria</taxon>
        <taxon>Bacillati</taxon>
        <taxon>Bacillota</taxon>
        <taxon>Bacilli</taxon>
        <taxon>Lactobacillales</taxon>
        <taxon>Streptococcaceae</taxon>
        <taxon>Streptococcus</taxon>
    </lineage>
</organism>
<comment type="function">
    <text evidence="1">Specifically methylates the N4 position of cytidine in position 1402 (C1402) of 16S rRNA.</text>
</comment>
<comment type="catalytic activity">
    <reaction evidence="1">
        <text>cytidine(1402) in 16S rRNA + S-adenosyl-L-methionine = N(4)-methylcytidine(1402) in 16S rRNA + S-adenosyl-L-homocysteine + H(+)</text>
        <dbReference type="Rhea" id="RHEA:42928"/>
        <dbReference type="Rhea" id="RHEA-COMP:10286"/>
        <dbReference type="Rhea" id="RHEA-COMP:10287"/>
        <dbReference type="ChEBI" id="CHEBI:15378"/>
        <dbReference type="ChEBI" id="CHEBI:57856"/>
        <dbReference type="ChEBI" id="CHEBI:59789"/>
        <dbReference type="ChEBI" id="CHEBI:74506"/>
        <dbReference type="ChEBI" id="CHEBI:82748"/>
        <dbReference type="EC" id="2.1.1.199"/>
    </reaction>
</comment>
<comment type="subcellular location">
    <subcellularLocation>
        <location evidence="1">Cytoplasm</location>
    </subcellularLocation>
</comment>
<comment type="similarity">
    <text evidence="1">Belongs to the methyltransferase superfamily. RsmH family.</text>
</comment>
<accession>Q3K394</accession>
<reference key="1">
    <citation type="journal article" date="2005" name="Proc. Natl. Acad. Sci. U.S.A.">
        <title>Genome analysis of multiple pathogenic isolates of Streptococcus agalactiae: implications for the microbial 'pan-genome'.</title>
        <authorList>
            <person name="Tettelin H."/>
            <person name="Masignani V."/>
            <person name="Cieslewicz M.J."/>
            <person name="Donati C."/>
            <person name="Medini D."/>
            <person name="Ward N.L."/>
            <person name="Angiuoli S.V."/>
            <person name="Crabtree J."/>
            <person name="Jones A.L."/>
            <person name="Durkin A.S."/>
            <person name="DeBoy R.T."/>
            <person name="Davidsen T.M."/>
            <person name="Mora M."/>
            <person name="Scarselli M."/>
            <person name="Margarit y Ros I."/>
            <person name="Peterson J.D."/>
            <person name="Hauser C.R."/>
            <person name="Sundaram J.P."/>
            <person name="Nelson W.C."/>
            <person name="Madupu R."/>
            <person name="Brinkac L.M."/>
            <person name="Dodson R.J."/>
            <person name="Rosovitz M.J."/>
            <person name="Sullivan S.A."/>
            <person name="Daugherty S.C."/>
            <person name="Haft D.H."/>
            <person name="Selengut J."/>
            <person name="Gwinn M.L."/>
            <person name="Zhou L."/>
            <person name="Zafar N."/>
            <person name="Khouri H."/>
            <person name="Radune D."/>
            <person name="Dimitrov G."/>
            <person name="Watkins K."/>
            <person name="O'Connor K.J."/>
            <person name="Smith S."/>
            <person name="Utterback T.R."/>
            <person name="White O."/>
            <person name="Rubens C.E."/>
            <person name="Grandi G."/>
            <person name="Madoff L.C."/>
            <person name="Kasper D.L."/>
            <person name="Telford J.L."/>
            <person name="Wessels M.R."/>
            <person name="Rappuoli R."/>
            <person name="Fraser C.M."/>
        </authorList>
    </citation>
    <scope>NUCLEOTIDE SEQUENCE [LARGE SCALE GENOMIC DNA]</scope>
    <source>
        <strain>ATCC 27591 / A909 / CDC SS700</strain>
    </source>
</reference>
<evidence type="ECO:0000255" key="1">
    <source>
        <dbReference type="HAMAP-Rule" id="MF_01007"/>
    </source>
</evidence>
<feature type="chain" id="PRO_0000223568" description="Ribosomal RNA small subunit methyltransferase H">
    <location>
        <begin position="1"/>
        <end position="315"/>
    </location>
</feature>
<feature type="binding site" evidence="1">
    <location>
        <begin position="35"/>
        <end position="37"/>
    </location>
    <ligand>
        <name>S-adenosyl-L-methionine</name>
        <dbReference type="ChEBI" id="CHEBI:59789"/>
    </ligand>
</feature>
<feature type="binding site" evidence="1">
    <location>
        <position position="55"/>
    </location>
    <ligand>
        <name>S-adenosyl-L-methionine</name>
        <dbReference type="ChEBI" id="CHEBI:59789"/>
    </ligand>
</feature>
<feature type="binding site" evidence="1">
    <location>
        <position position="84"/>
    </location>
    <ligand>
        <name>S-adenosyl-L-methionine</name>
        <dbReference type="ChEBI" id="CHEBI:59789"/>
    </ligand>
</feature>
<feature type="binding site" evidence="1">
    <location>
        <position position="105"/>
    </location>
    <ligand>
        <name>S-adenosyl-L-methionine</name>
        <dbReference type="ChEBI" id="CHEBI:59789"/>
    </ligand>
</feature>
<feature type="binding site" evidence="1">
    <location>
        <position position="112"/>
    </location>
    <ligand>
        <name>S-adenosyl-L-methionine</name>
        <dbReference type="ChEBI" id="CHEBI:59789"/>
    </ligand>
</feature>
<gene>
    <name evidence="1" type="primary">rsmH</name>
    <name type="synonym">mraW</name>
    <name type="ordered locus">SAK_0357</name>
</gene>
<dbReference type="EC" id="2.1.1.199" evidence="1"/>
<dbReference type="EMBL" id="CP000114">
    <property type="protein sequence ID" value="ABA45811.1"/>
    <property type="molecule type" value="Genomic_DNA"/>
</dbReference>
<dbReference type="RefSeq" id="WP_000180266.1">
    <property type="nucleotide sequence ID" value="NC_007432.1"/>
</dbReference>
<dbReference type="SMR" id="Q3K394"/>
<dbReference type="KEGG" id="sak:SAK_0357"/>
<dbReference type="HOGENOM" id="CLU_038422_2_0_9"/>
<dbReference type="GO" id="GO:0005737">
    <property type="term" value="C:cytoplasm"/>
    <property type="evidence" value="ECO:0007669"/>
    <property type="project" value="UniProtKB-SubCell"/>
</dbReference>
<dbReference type="GO" id="GO:0071424">
    <property type="term" value="F:rRNA (cytosine-N4-)-methyltransferase activity"/>
    <property type="evidence" value="ECO:0007669"/>
    <property type="project" value="UniProtKB-UniRule"/>
</dbReference>
<dbReference type="GO" id="GO:0070475">
    <property type="term" value="P:rRNA base methylation"/>
    <property type="evidence" value="ECO:0007669"/>
    <property type="project" value="UniProtKB-UniRule"/>
</dbReference>
<dbReference type="FunFam" id="1.10.150.170:FF:000001">
    <property type="entry name" value="Ribosomal RNA small subunit methyltransferase H"/>
    <property type="match status" value="1"/>
</dbReference>
<dbReference type="Gene3D" id="1.10.150.170">
    <property type="entry name" value="Putative methyltransferase TM0872, insert domain"/>
    <property type="match status" value="1"/>
</dbReference>
<dbReference type="Gene3D" id="3.40.50.150">
    <property type="entry name" value="Vaccinia Virus protein VP39"/>
    <property type="match status" value="1"/>
</dbReference>
<dbReference type="HAMAP" id="MF_01007">
    <property type="entry name" value="16SrRNA_methyltr_H"/>
    <property type="match status" value="1"/>
</dbReference>
<dbReference type="InterPro" id="IPR002903">
    <property type="entry name" value="RsmH"/>
</dbReference>
<dbReference type="InterPro" id="IPR023397">
    <property type="entry name" value="SAM-dep_MeTrfase_MraW_recog"/>
</dbReference>
<dbReference type="InterPro" id="IPR029063">
    <property type="entry name" value="SAM-dependent_MTases_sf"/>
</dbReference>
<dbReference type="NCBIfam" id="TIGR00006">
    <property type="entry name" value="16S rRNA (cytosine(1402)-N(4))-methyltransferase RsmH"/>
    <property type="match status" value="1"/>
</dbReference>
<dbReference type="PANTHER" id="PTHR11265:SF0">
    <property type="entry name" value="12S RRNA N4-METHYLCYTIDINE METHYLTRANSFERASE"/>
    <property type="match status" value="1"/>
</dbReference>
<dbReference type="PANTHER" id="PTHR11265">
    <property type="entry name" value="S-ADENOSYL-METHYLTRANSFERASE MRAW"/>
    <property type="match status" value="1"/>
</dbReference>
<dbReference type="Pfam" id="PF01795">
    <property type="entry name" value="Methyltransf_5"/>
    <property type="match status" value="1"/>
</dbReference>
<dbReference type="PIRSF" id="PIRSF004486">
    <property type="entry name" value="MraW"/>
    <property type="match status" value="1"/>
</dbReference>
<dbReference type="SUPFAM" id="SSF81799">
    <property type="entry name" value="Putative methyltransferase TM0872, insert domain"/>
    <property type="match status" value="1"/>
</dbReference>
<dbReference type="SUPFAM" id="SSF53335">
    <property type="entry name" value="S-adenosyl-L-methionine-dependent methyltransferases"/>
    <property type="match status" value="1"/>
</dbReference>
<name>RSMH_STRA1</name>
<keyword id="KW-0963">Cytoplasm</keyword>
<keyword id="KW-0489">Methyltransferase</keyword>
<keyword id="KW-0698">rRNA processing</keyword>
<keyword id="KW-0949">S-adenosyl-L-methionine</keyword>
<keyword id="KW-0808">Transferase</keyword>
<sequence length="315" mass="35687">MTNDFHHITVLLHETVDMLDIKPDGIYVDATLGGAGHSEYLLSQLGPDGHLYAFDQDQKAIDNAHIRLKKYVDTGQVTFIKDNFRNLSSNLKALGVSEINGICYDLGVSSPQLDERERGFSYKQDAPLDMRMNREQSLTAYDVVNTYSYHDLVRIFFKYGEDKFSKQIARKIEQVRAEKTISTTTELAEIIKSSKSAKELKKKGHPAKQIFQAIRIEVNDELGAADESIQQAMDLLAVDGRISVITFHSLEDRLTKQLFKEASTVEVPKGLPFIPDDLQPKMELVNRKPILPSQEELEANNRAHSAKLRVARRIR</sequence>
<proteinExistence type="inferred from homology"/>
<protein>
    <recommendedName>
        <fullName evidence="1">Ribosomal RNA small subunit methyltransferase H</fullName>
        <ecNumber evidence="1">2.1.1.199</ecNumber>
    </recommendedName>
    <alternativeName>
        <fullName evidence="1">16S rRNA m(4)C1402 methyltransferase</fullName>
    </alternativeName>
    <alternativeName>
        <fullName evidence="1">rRNA (cytosine-N(4)-)-methyltransferase RsmH</fullName>
    </alternativeName>
</protein>